<accession>A4WAY6</accession>
<gene>
    <name evidence="1" type="primary">ribA</name>
    <name type="ordered locus">Ent638_2191</name>
</gene>
<name>RIBA_ENT38</name>
<proteinExistence type="inferred from homology"/>
<dbReference type="EC" id="3.5.4.25" evidence="1"/>
<dbReference type="EMBL" id="CP000653">
    <property type="protein sequence ID" value="ABP60866.1"/>
    <property type="molecule type" value="Genomic_DNA"/>
</dbReference>
<dbReference type="RefSeq" id="WP_012017581.1">
    <property type="nucleotide sequence ID" value="NC_009436.1"/>
</dbReference>
<dbReference type="SMR" id="A4WAY6"/>
<dbReference type="STRING" id="399742.Ent638_2191"/>
<dbReference type="KEGG" id="ent:Ent638_2191"/>
<dbReference type="eggNOG" id="COG0807">
    <property type="taxonomic scope" value="Bacteria"/>
</dbReference>
<dbReference type="HOGENOM" id="CLU_020273_2_1_6"/>
<dbReference type="UniPathway" id="UPA00275">
    <property type="reaction ID" value="UER00400"/>
</dbReference>
<dbReference type="Proteomes" id="UP000000230">
    <property type="component" value="Chromosome"/>
</dbReference>
<dbReference type="GO" id="GO:0005829">
    <property type="term" value="C:cytosol"/>
    <property type="evidence" value="ECO:0007669"/>
    <property type="project" value="TreeGrafter"/>
</dbReference>
<dbReference type="GO" id="GO:0005525">
    <property type="term" value="F:GTP binding"/>
    <property type="evidence" value="ECO:0007669"/>
    <property type="project" value="UniProtKB-KW"/>
</dbReference>
<dbReference type="GO" id="GO:0003935">
    <property type="term" value="F:GTP cyclohydrolase II activity"/>
    <property type="evidence" value="ECO:0007669"/>
    <property type="project" value="UniProtKB-UniRule"/>
</dbReference>
<dbReference type="GO" id="GO:0008270">
    <property type="term" value="F:zinc ion binding"/>
    <property type="evidence" value="ECO:0007669"/>
    <property type="project" value="UniProtKB-UniRule"/>
</dbReference>
<dbReference type="GO" id="GO:0009231">
    <property type="term" value="P:riboflavin biosynthetic process"/>
    <property type="evidence" value="ECO:0007669"/>
    <property type="project" value="UniProtKB-UniRule"/>
</dbReference>
<dbReference type="CDD" id="cd00641">
    <property type="entry name" value="GTP_cyclohydro2"/>
    <property type="match status" value="1"/>
</dbReference>
<dbReference type="FunFam" id="3.40.50.10990:FF:000002">
    <property type="entry name" value="GTP cyclohydrolase-2"/>
    <property type="match status" value="1"/>
</dbReference>
<dbReference type="Gene3D" id="3.40.50.10990">
    <property type="entry name" value="GTP cyclohydrolase II"/>
    <property type="match status" value="1"/>
</dbReference>
<dbReference type="HAMAP" id="MF_00179">
    <property type="entry name" value="RibA"/>
    <property type="match status" value="1"/>
</dbReference>
<dbReference type="InterPro" id="IPR032677">
    <property type="entry name" value="GTP_cyclohydro_II"/>
</dbReference>
<dbReference type="InterPro" id="IPR000926">
    <property type="entry name" value="RibA"/>
</dbReference>
<dbReference type="InterPro" id="IPR036144">
    <property type="entry name" value="RibA-like_sf"/>
</dbReference>
<dbReference type="NCBIfam" id="NF001591">
    <property type="entry name" value="PRK00393.1"/>
    <property type="match status" value="1"/>
</dbReference>
<dbReference type="NCBIfam" id="TIGR00505">
    <property type="entry name" value="ribA"/>
    <property type="match status" value="1"/>
</dbReference>
<dbReference type="PANTHER" id="PTHR21327:SF18">
    <property type="entry name" value="3,4-DIHYDROXY-2-BUTANONE 4-PHOSPHATE SYNTHASE"/>
    <property type="match status" value="1"/>
</dbReference>
<dbReference type="PANTHER" id="PTHR21327">
    <property type="entry name" value="GTP CYCLOHYDROLASE II-RELATED"/>
    <property type="match status" value="1"/>
</dbReference>
<dbReference type="Pfam" id="PF00925">
    <property type="entry name" value="GTP_cyclohydro2"/>
    <property type="match status" value="1"/>
</dbReference>
<dbReference type="SUPFAM" id="SSF142695">
    <property type="entry name" value="RibA-like"/>
    <property type="match status" value="1"/>
</dbReference>
<comment type="function">
    <text evidence="1">Catalyzes the conversion of GTP to 2,5-diamino-6-ribosylamino-4(3H)-pyrimidinone 5'-phosphate (DARP), formate and pyrophosphate.</text>
</comment>
<comment type="catalytic activity">
    <reaction evidence="1">
        <text>GTP + 4 H2O = 2,5-diamino-6-hydroxy-4-(5-phosphoribosylamino)-pyrimidine + formate + 2 phosphate + 3 H(+)</text>
        <dbReference type="Rhea" id="RHEA:23704"/>
        <dbReference type="ChEBI" id="CHEBI:15377"/>
        <dbReference type="ChEBI" id="CHEBI:15378"/>
        <dbReference type="ChEBI" id="CHEBI:15740"/>
        <dbReference type="ChEBI" id="CHEBI:37565"/>
        <dbReference type="ChEBI" id="CHEBI:43474"/>
        <dbReference type="ChEBI" id="CHEBI:58614"/>
        <dbReference type="EC" id="3.5.4.25"/>
    </reaction>
</comment>
<comment type="cofactor">
    <cofactor evidence="1">
        <name>Zn(2+)</name>
        <dbReference type="ChEBI" id="CHEBI:29105"/>
    </cofactor>
    <text evidence="1">Binds 1 zinc ion per subunit.</text>
</comment>
<comment type="pathway">
    <text evidence="1">Cofactor biosynthesis; riboflavin biosynthesis; 5-amino-6-(D-ribitylamino)uracil from GTP: step 1/4.</text>
</comment>
<comment type="subunit">
    <text evidence="1">Homodimer.</text>
</comment>
<comment type="similarity">
    <text evidence="1">Belongs to the GTP cyclohydrolase II family.</text>
</comment>
<reference key="1">
    <citation type="journal article" date="2010" name="PLoS Genet.">
        <title>Genome sequence of the plant growth promoting endophytic bacterium Enterobacter sp. 638.</title>
        <authorList>
            <person name="Taghavi S."/>
            <person name="van der Lelie D."/>
            <person name="Hoffman A."/>
            <person name="Zhang Y.B."/>
            <person name="Walla M.D."/>
            <person name="Vangronsveld J."/>
            <person name="Newman L."/>
            <person name="Monchy S."/>
        </authorList>
    </citation>
    <scope>NUCLEOTIDE SEQUENCE [LARGE SCALE GENOMIC DNA]</scope>
    <source>
        <strain>638</strain>
    </source>
</reference>
<protein>
    <recommendedName>
        <fullName evidence="1">GTP cyclohydrolase-2</fullName>
        <ecNumber evidence="1">3.5.4.25</ecNumber>
    </recommendedName>
    <alternativeName>
        <fullName evidence="1">GTP cyclohydrolase II</fullName>
    </alternativeName>
</protein>
<organism>
    <name type="scientific">Enterobacter sp. (strain 638)</name>
    <dbReference type="NCBI Taxonomy" id="399742"/>
    <lineage>
        <taxon>Bacteria</taxon>
        <taxon>Pseudomonadati</taxon>
        <taxon>Pseudomonadota</taxon>
        <taxon>Gammaproteobacteria</taxon>
        <taxon>Enterobacterales</taxon>
        <taxon>Enterobacteriaceae</taxon>
        <taxon>Enterobacter</taxon>
    </lineage>
</organism>
<sequence>MQLKRVAEANLPTPWGDFLMVGFEEVATGQDHVALVFGDISGQTPVLARVHSECLTGDALFSLRCDCGFQLEAALSQIAEEGRGILLYHRQEGRNIGLLNKIRAYALQDQGYDTVEANHQLGFAADERDFTLCADMFKLLGVDEVRLLTNNPRKVEILTEAGINIVERVSLIVGRNPKNEHYLDTKAAKMGHLLSE</sequence>
<keyword id="KW-0342">GTP-binding</keyword>
<keyword id="KW-0378">Hydrolase</keyword>
<keyword id="KW-0479">Metal-binding</keyword>
<keyword id="KW-0547">Nucleotide-binding</keyword>
<keyword id="KW-0686">Riboflavin biosynthesis</keyword>
<keyword id="KW-0862">Zinc</keyword>
<feature type="chain" id="PRO_1000058377" description="GTP cyclohydrolase-2">
    <location>
        <begin position="1"/>
        <end position="196"/>
    </location>
</feature>
<feature type="active site" description="Proton acceptor" evidence="1">
    <location>
        <position position="126"/>
    </location>
</feature>
<feature type="active site" description="Nucleophile" evidence="1">
    <location>
        <position position="128"/>
    </location>
</feature>
<feature type="binding site" evidence="1">
    <location>
        <begin position="49"/>
        <end position="53"/>
    </location>
    <ligand>
        <name>GTP</name>
        <dbReference type="ChEBI" id="CHEBI:37565"/>
    </ligand>
</feature>
<feature type="binding site" evidence="1">
    <location>
        <position position="54"/>
    </location>
    <ligand>
        <name>Zn(2+)</name>
        <dbReference type="ChEBI" id="CHEBI:29105"/>
        <note>catalytic</note>
    </ligand>
</feature>
<feature type="binding site" evidence="1">
    <location>
        <position position="65"/>
    </location>
    <ligand>
        <name>Zn(2+)</name>
        <dbReference type="ChEBI" id="CHEBI:29105"/>
        <note>catalytic</note>
    </ligand>
</feature>
<feature type="binding site" evidence="1">
    <location>
        <position position="67"/>
    </location>
    <ligand>
        <name>Zn(2+)</name>
        <dbReference type="ChEBI" id="CHEBI:29105"/>
        <note>catalytic</note>
    </ligand>
</feature>
<feature type="binding site" evidence="1">
    <location>
        <position position="70"/>
    </location>
    <ligand>
        <name>GTP</name>
        <dbReference type="ChEBI" id="CHEBI:37565"/>
    </ligand>
</feature>
<feature type="binding site" evidence="1">
    <location>
        <begin position="92"/>
        <end position="94"/>
    </location>
    <ligand>
        <name>GTP</name>
        <dbReference type="ChEBI" id="CHEBI:37565"/>
    </ligand>
</feature>
<feature type="binding site" evidence="1">
    <location>
        <position position="114"/>
    </location>
    <ligand>
        <name>GTP</name>
        <dbReference type="ChEBI" id="CHEBI:37565"/>
    </ligand>
</feature>
<feature type="binding site" evidence="1">
    <location>
        <position position="149"/>
    </location>
    <ligand>
        <name>GTP</name>
        <dbReference type="ChEBI" id="CHEBI:37565"/>
    </ligand>
</feature>
<feature type="binding site" evidence="1">
    <location>
        <position position="154"/>
    </location>
    <ligand>
        <name>GTP</name>
        <dbReference type="ChEBI" id="CHEBI:37565"/>
    </ligand>
</feature>
<evidence type="ECO:0000255" key="1">
    <source>
        <dbReference type="HAMAP-Rule" id="MF_00179"/>
    </source>
</evidence>